<gene>
    <name evidence="1" type="primary">alaS</name>
    <name type="ordered locus">Pden_0598</name>
</gene>
<protein>
    <recommendedName>
        <fullName evidence="1">Alanine--tRNA ligase</fullName>
        <ecNumber evidence="1">6.1.1.7</ecNumber>
    </recommendedName>
    <alternativeName>
        <fullName evidence="1">Alanyl-tRNA synthetase</fullName>
        <shortName evidence="1">AlaRS</shortName>
    </alternativeName>
</protein>
<keyword id="KW-0030">Aminoacyl-tRNA synthetase</keyword>
<keyword id="KW-0067">ATP-binding</keyword>
<keyword id="KW-0963">Cytoplasm</keyword>
<keyword id="KW-0436">Ligase</keyword>
<keyword id="KW-0479">Metal-binding</keyword>
<keyword id="KW-0547">Nucleotide-binding</keyword>
<keyword id="KW-0648">Protein biosynthesis</keyword>
<keyword id="KW-1185">Reference proteome</keyword>
<keyword id="KW-0694">RNA-binding</keyword>
<keyword id="KW-0820">tRNA-binding</keyword>
<keyword id="KW-0862">Zinc</keyword>
<evidence type="ECO:0000255" key="1">
    <source>
        <dbReference type="HAMAP-Rule" id="MF_00036"/>
    </source>
</evidence>
<evidence type="ECO:0000256" key="2">
    <source>
        <dbReference type="SAM" id="MobiDB-lite"/>
    </source>
</evidence>
<feature type="chain" id="PRO_0000347712" description="Alanine--tRNA ligase">
    <location>
        <begin position="1"/>
        <end position="885"/>
    </location>
</feature>
<feature type="region of interest" description="Disordered" evidence="2">
    <location>
        <begin position="848"/>
        <end position="868"/>
    </location>
</feature>
<feature type="binding site" evidence="1">
    <location>
        <position position="563"/>
    </location>
    <ligand>
        <name>Zn(2+)</name>
        <dbReference type="ChEBI" id="CHEBI:29105"/>
    </ligand>
</feature>
<feature type="binding site" evidence="1">
    <location>
        <position position="567"/>
    </location>
    <ligand>
        <name>Zn(2+)</name>
        <dbReference type="ChEBI" id="CHEBI:29105"/>
    </ligand>
</feature>
<feature type="binding site" evidence="1">
    <location>
        <position position="677"/>
    </location>
    <ligand>
        <name>Zn(2+)</name>
        <dbReference type="ChEBI" id="CHEBI:29105"/>
    </ligand>
</feature>
<feature type="binding site" evidence="1">
    <location>
        <position position="681"/>
    </location>
    <ligand>
        <name>Zn(2+)</name>
        <dbReference type="ChEBI" id="CHEBI:29105"/>
    </ligand>
</feature>
<sequence length="885" mass="95452">MPSLNDVRSTFLNYFERNGHRVVESSPLVPRNDPTLMFTNSGMVQFKNLFTGVETRDYKRATTAQKCVRAGGKHNDLDNVGYTARHHTFFEMLGNFSFGDYFKDGAIPFAWELLTKDFGIPKDKLLVTVYHTDDEAADIWKKVAGLSDDRIIRIPTSDNFWQMGPTGPCGPCTEIFYDHGEQIWGGPPGSADEDGDRFIEIWNLVFMQNEQFEDGTMRALDMQSIDTGMGLERIGALLQGKHDNYDTDLMRGLIEASAHATSADPDGPGKVHHRVIADHLRSTSFLIADGVMPSNEGRGYVLRRIMRRAMRHAHMLGAKDPVMHRLVPALVREMGAAYPELGRAQALIEETLKLEETRFKQTLDRGLRLLDDELAKLPEGANLPGEAAFKLYDTYGFPLDLTQDALREKGRAVDTAGFDSAMAEQKAKARAAWAGSGETKDAAIWFDIAEEHGATEFLGYDTEISEGQVLALVQDGAAVEEAGEGQQVQIVVNQTPFYGEAGGQVGDTGLIKTETGAARVTDTKKTGGVFIHIAEVTLGTIQRGQGAQLSVDHDRRSAIRANHSATHLLHEALRRALGEHVAQRGSLNAPDRLRFDFSHAKAMTPEELAQVEREVNDFIRQNSPVETRIMTPDDARALGAQALFGEKYGDEVRVVSMGELPGSGKGTGGQTYSLELCGGTHVARTGDIGMFALTSETASAAGIRRIEALTGQAAMDELRRVDGELNEIAGIVKAQAGDVVSKVRALADERKALANEVAQLKRQLAMGGGSEDKPREINGIKLIARRVEGVSGKELGPLVDEMKSRLGSGAVVVLAEADGKATVAAGVTPDLTGRISAVELVQTATAALGGKGGGGRPDRAQGGAPSLAAADSAISAVETLIGEKA</sequence>
<accession>A1AZL6</accession>
<comment type="function">
    <text evidence="1">Catalyzes the attachment of alanine to tRNA(Ala) in a two-step reaction: alanine is first activated by ATP to form Ala-AMP and then transferred to the acceptor end of tRNA(Ala). Also edits incorrectly charged Ser-tRNA(Ala) and Gly-tRNA(Ala) via its editing domain.</text>
</comment>
<comment type="catalytic activity">
    <reaction evidence="1">
        <text>tRNA(Ala) + L-alanine + ATP = L-alanyl-tRNA(Ala) + AMP + diphosphate</text>
        <dbReference type="Rhea" id="RHEA:12540"/>
        <dbReference type="Rhea" id="RHEA-COMP:9657"/>
        <dbReference type="Rhea" id="RHEA-COMP:9923"/>
        <dbReference type="ChEBI" id="CHEBI:30616"/>
        <dbReference type="ChEBI" id="CHEBI:33019"/>
        <dbReference type="ChEBI" id="CHEBI:57972"/>
        <dbReference type="ChEBI" id="CHEBI:78442"/>
        <dbReference type="ChEBI" id="CHEBI:78497"/>
        <dbReference type="ChEBI" id="CHEBI:456215"/>
        <dbReference type="EC" id="6.1.1.7"/>
    </reaction>
</comment>
<comment type="cofactor">
    <cofactor evidence="1">
        <name>Zn(2+)</name>
        <dbReference type="ChEBI" id="CHEBI:29105"/>
    </cofactor>
    <text evidence="1">Binds 1 zinc ion per subunit.</text>
</comment>
<comment type="subcellular location">
    <subcellularLocation>
        <location evidence="1">Cytoplasm</location>
    </subcellularLocation>
</comment>
<comment type="domain">
    <text evidence="1">Consists of three domains; the N-terminal catalytic domain, the editing domain and the C-terminal C-Ala domain. The editing domain removes incorrectly charged amino acids, while the C-Ala domain, along with tRNA(Ala), serves as a bridge to cooperatively bring together the editing and aminoacylation centers thus stimulating deacylation of misacylated tRNAs.</text>
</comment>
<comment type="similarity">
    <text evidence="1">Belongs to the class-II aminoacyl-tRNA synthetase family.</text>
</comment>
<proteinExistence type="inferred from homology"/>
<dbReference type="EC" id="6.1.1.7" evidence="1"/>
<dbReference type="EMBL" id="CP000489">
    <property type="protein sequence ID" value="ABL68710.1"/>
    <property type="molecule type" value="Genomic_DNA"/>
</dbReference>
<dbReference type="RefSeq" id="WP_011746943.1">
    <property type="nucleotide sequence ID" value="NC_008686.1"/>
</dbReference>
<dbReference type="SMR" id="A1AZL6"/>
<dbReference type="STRING" id="318586.Pden_0598"/>
<dbReference type="EnsemblBacteria" id="ABL68710">
    <property type="protein sequence ID" value="ABL68710"/>
    <property type="gene ID" value="Pden_0598"/>
</dbReference>
<dbReference type="GeneID" id="93451823"/>
<dbReference type="KEGG" id="pde:Pden_0598"/>
<dbReference type="eggNOG" id="COG0013">
    <property type="taxonomic scope" value="Bacteria"/>
</dbReference>
<dbReference type="HOGENOM" id="CLU_004485_1_1_5"/>
<dbReference type="OrthoDB" id="9803884at2"/>
<dbReference type="Proteomes" id="UP000000361">
    <property type="component" value="Chromosome 1"/>
</dbReference>
<dbReference type="GO" id="GO:0005829">
    <property type="term" value="C:cytosol"/>
    <property type="evidence" value="ECO:0007669"/>
    <property type="project" value="TreeGrafter"/>
</dbReference>
<dbReference type="GO" id="GO:0004813">
    <property type="term" value="F:alanine-tRNA ligase activity"/>
    <property type="evidence" value="ECO:0007669"/>
    <property type="project" value="UniProtKB-UniRule"/>
</dbReference>
<dbReference type="GO" id="GO:0002161">
    <property type="term" value="F:aminoacyl-tRNA deacylase activity"/>
    <property type="evidence" value="ECO:0007669"/>
    <property type="project" value="TreeGrafter"/>
</dbReference>
<dbReference type="GO" id="GO:0005524">
    <property type="term" value="F:ATP binding"/>
    <property type="evidence" value="ECO:0007669"/>
    <property type="project" value="UniProtKB-UniRule"/>
</dbReference>
<dbReference type="GO" id="GO:0000049">
    <property type="term" value="F:tRNA binding"/>
    <property type="evidence" value="ECO:0007669"/>
    <property type="project" value="UniProtKB-KW"/>
</dbReference>
<dbReference type="GO" id="GO:0008270">
    <property type="term" value="F:zinc ion binding"/>
    <property type="evidence" value="ECO:0007669"/>
    <property type="project" value="UniProtKB-UniRule"/>
</dbReference>
<dbReference type="GO" id="GO:0006419">
    <property type="term" value="P:alanyl-tRNA aminoacylation"/>
    <property type="evidence" value="ECO:0007669"/>
    <property type="project" value="UniProtKB-UniRule"/>
</dbReference>
<dbReference type="GO" id="GO:0045892">
    <property type="term" value="P:negative regulation of DNA-templated transcription"/>
    <property type="evidence" value="ECO:0007669"/>
    <property type="project" value="TreeGrafter"/>
</dbReference>
<dbReference type="CDD" id="cd00673">
    <property type="entry name" value="AlaRS_core"/>
    <property type="match status" value="1"/>
</dbReference>
<dbReference type="FunFam" id="2.40.30.130:FF:000001">
    <property type="entry name" value="Alanine--tRNA ligase"/>
    <property type="match status" value="1"/>
</dbReference>
<dbReference type="FunFam" id="3.10.310.40:FF:000001">
    <property type="entry name" value="Alanine--tRNA ligase"/>
    <property type="match status" value="1"/>
</dbReference>
<dbReference type="FunFam" id="3.30.54.20:FF:000001">
    <property type="entry name" value="Alanine--tRNA ligase"/>
    <property type="match status" value="1"/>
</dbReference>
<dbReference type="FunFam" id="3.30.930.10:FF:000004">
    <property type="entry name" value="Alanine--tRNA ligase"/>
    <property type="match status" value="1"/>
</dbReference>
<dbReference type="FunFam" id="3.30.980.10:FF:000004">
    <property type="entry name" value="Alanine--tRNA ligase, cytoplasmic"/>
    <property type="match status" value="1"/>
</dbReference>
<dbReference type="Gene3D" id="2.40.30.130">
    <property type="match status" value="1"/>
</dbReference>
<dbReference type="Gene3D" id="3.10.310.40">
    <property type="match status" value="1"/>
</dbReference>
<dbReference type="Gene3D" id="3.30.54.20">
    <property type="match status" value="1"/>
</dbReference>
<dbReference type="Gene3D" id="6.10.250.550">
    <property type="match status" value="1"/>
</dbReference>
<dbReference type="Gene3D" id="3.30.930.10">
    <property type="entry name" value="Bira Bifunctional Protein, Domain 2"/>
    <property type="match status" value="1"/>
</dbReference>
<dbReference type="Gene3D" id="3.30.980.10">
    <property type="entry name" value="Threonyl-trna Synthetase, Chain A, domain 2"/>
    <property type="match status" value="1"/>
</dbReference>
<dbReference type="HAMAP" id="MF_00036_B">
    <property type="entry name" value="Ala_tRNA_synth_B"/>
    <property type="match status" value="1"/>
</dbReference>
<dbReference type="InterPro" id="IPR045864">
    <property type="entry name" value="aa-tRNA-synth_II/BPL/LPL"/>
</dbReference>
<dbReference type="InterPro" id="IPR002318">
    <property type="entry name" value="Ala-tRNA-lgiase_IIc"/>
</dbReference>
<dbReference type="InterPro" id="IPR018162">
    <property type="entry name" value="Ala-tRNA-ligase_IIc_anticod-bd"/>
</dbReference>
<dbReference type="InterPro" id="IPR018165">
    <property type="entry name" value="Ala-tRNA-synth_IIc_core"/>
</dbReference>
<dbReference type="InterPro" id="IPR018164">
    <property type="entry name" value="Ala-tRNA-synth_IIc_N"/>
</dbReference>
<dbReference type="InterPro" id="IPR050058">
    <property type="entry name" value="Ala-tRNA_ligase"/>
</dbReference>
<dbReference type="InterPro" id="IPR023033">
    <property type="entry name" value="Ala_tRNA_ligase_euk/bac"/>
</dbReference>
<dbReference type="InterPro" id="IPR003156">
    <property type="entry name" value="DHHA1_dom"/>
</dbReference>
<dbReference type="InterPro" id="IPR018163">
    <property type="entry name" value="Thr/Ala-tRNA-synth_IIc_edit"/>
</dbReference>
<dbReference type="InterPro" id="IPR009000">
    <property type="entry name" value="Transl_B-barrel_sf"/>
</dbReference>
<dbReference type="InterPro" id="IPR012947">
    <property type="entry name" value="tRNA_SAD"/>
</dbReference>
<dbReference type="NCBIfam" id="TIGR00344">
    <property type="entry name" value="alaS"/>
    <property type="match status" value="1"/>
</dbReference>
<dbReference type="PANTHER" id="PTHR11777:SF9">
    <property type="entry name" value="ALANINE--TRNA LIGASE, CYTOPLASMIC"/>
    <property type="match status" value="1"/>
</dbReference>
<dbReference type="PANTHER" id="PTHR11777">
    <property type="entry name" value="ALANYL-TRNA SYNTHETASE"/>
    <property type="match status" value="1"/>
</dbReference>
<dbReference type="Pfam" id="PF02272">
    <property type="entry name" value="DHHA1"/>
    <property type="match status" value="1"/>
</dbReference>
<dbReference type="Pfam" id="PF01411">
    <property type="entry name" value="tRNA-synt_2c"/>
    <property type="match status" value="1"/>
</dbReference>
<dbReference type="Pfam" id="PF07973">
    <property type="entry name" value="tRNA_SAD"/>
    <property type="match status" value="1"/>
</dbReference>
<dbReference type="PRINTS" id="PR00980">
    <property type="entry name" value="TRNASYNTHALA"/>
</dbReference>
<dbReference type="SMART" id="SM00863">
    <property type="entry name" value="tRNA_SAD"/>
    <property type="match status" value="1"/>
</dbReference>
<dbReference type="SUPFAM" id="SSF55681">
    <property type="entry name" value="Class II aaRS and biotin synthetases"/>
    <property type="match status" value="1"/>
</dbReference>
<dbReference type="SUPFAM" id="SSF101353">
    <property type="entry name" value="Putative anticodon-binding domain of alanyl-tRNA synthetase (AlaRS)"/>
    <property type="match status" value="1"/>
</dbReference>
<dbReference type="SUPFAM" id="SSF55186">
    <property type="entry name" value="ThrRS/AlaRS common domain"/>
    <property type="match status" value="1"/>
</dbReference>
<dbReference type="SUPFAM" id="SSF50447">
    <property type="entry name" value="Translation proteins"/>
    <property type="match status" value="1"/>
</dbReference>
<dbReference type="PROSITE" id="PS50860">
    <property type="entry name" value="AA_TRNA_LIGASE_II_ALA"/>
    <property type="match status" value="1"/>
</dbReference>
<name>SYA_PARDP</name>
<reference key="1">
    <citation type="submission" date="2006-12" db="EMBL/GenBank/DDBJ databases">
        <title>Complete sequence of chromosome 1 of Paracoccus denitrificans PD1222.</title>
        <authorList>
            <person name="Copeland A."/>
            <person name="Lucas S."/>
            <person name="Lapidus A."/>
            <person name="Barry K."/>
            <person name="Detter J.C."/>
            <person name="Glavina del Rio T."/>
            <person name="Hammon N."/>
            <person name="Israni S."/>
            <person name="Dalin E."/>
            <person name="Tice H."/>
            <person name="Pitluck S."/>
            <person name="Munk A.C."/>
            <person name="Brettin T."/>
            <person name="Bruce D."/>
            <person name="Han C."/>
            <person name="Tapia R."/>
            <person name="Gilna P."/>
            <person name="Schmutz J."/>
            <person name="Larimer F."/>
            <person name="Land M."/>
            <person name="Hauser L."/>
            <person name="Kyrpides N."/>
            <person name="Lykidis A."/>
            <person name="Spiro S."/>
            <person name="Richardson D.J."/>
            <person name="Moir J.W.B."/>
            <person name="Ferguson S.J."/>
            <person name="van Spanning R.J.M."/>
            <person name="Richardson P."/>
        </authorList>
    </citation>
    <scope>NUCLEOTIDE SEQUENCE [LARGE SCALE GENOMIC DNA]</scope>
    <source>
        <strain>Pd 1222</strain>
    </source>
</reference>
<organism>
    <name type="scientific">Paracoccus denitrificans (strain Pd 1222)</name>
    <dbReference type="NCBI Taxonomy" id="318586"/>
    <lineage>
        <taxon>Bacteria</taxon>
        <taxon>Pseudomonadati</taxon>
        <taxon>Pseudomonadota</taxon>
        <taxon>Alphaproteobacteria</taxon>
        <taxon>Rhodobacterales</taxon>
        <taxon>Paracoccaceae</taxon>
        <taxon>Paracoccus</taxon>
    </lineage>
</organism>